<dbReference type="EMBL" id="CU329672">
    <property type="protein sequence ID" value="CAA19118.2"/>
    <property type="molecule type" value="Genomic_DNA"/>
</dbReference>
<dbReference type="PIR" id="T41389">
    <property type="entry name" value="T41389"/>
</dbReference>
<dbReference type="RefSeq" id="NP_588106.2">
    <property type="nucleotide sequence ID" value="NM_001023097.2"/>
</dbReference>
<dbReference type="SMR" id="O59810"/>
<dbReference type="BioGRID" id="275990">
    <property type="interactions" value="8"/>
</dbReference>
<dbReference type="FunCoup" id="O59810">
    <property type="interactions" value="255"/>
</dbReference>
<dbReference type="STRING" id="284812.O59810"/>
<dbReference type="iPTMnet" id="O59810"/>
<dbReference type="PaxDb" id="4896-SPCC550.14.1"/>
<dbReference type="EnsemblFungi" id="SPCC550.14.1">
    <property type="protein sequence ID" value="SPCC550.14.1:pep"/>
    <property type="gene ID" value="SPCC550.14"/>
</dbReference>
<dbReference type="GeneID" id="2539425"/>
<dbReference type="KEGG" id="spo:2539425"/>
<dbReference type="PomBase" id="SPCC550.14">
    <property type="gene designation" value="vgl1"/>
</dbReference>
<dbReference type="VEuPathDB" id="FungiDB:SPCC550.14"/>
<dbReference type="eggNOG" id="KOG2208">
    <property type="taxonomic scope" value="Eukaryota"/>
</dbReference>
<dbReference type="HOGENOM" id="CLU_003293_1_1_1"/>
<dbReference type="InParanoid" id="O59810"/>
<dbReference type="OMA" id="DHAGQQV"/>
<dbReference type="CD-CODE" id="F5301D48">
    <property type="entry name" value="Stress granule"/>
</dbReference>
<dbReference type="PRO" id="PR:O59810"/>
<dbReference type="Proteomes" id="UP000002485">
    <property type="component" value="Chromosome III"/>
</dbReference>
<dbReference type="GO" id="GO:0005737">
    <property type="term" value="C:cytoplasm"/>
    <property type="evidence" value="ECO:0000314"/>
    <property type="project" value="PomBase"/>
</dbReference>
<dbReference type="GO" id="GO:0010494">
    <property type="term" value="C:cytoplasmic stress granule"/>
    <property type="evidence" value="ECO:0000314"/>
    <property type="project" value="PomBase"/>
</dbReference>
<dbReference type="GO" id="GO:0005829">
    <property type="term" value="C:cytosol"/>
    <property type="evidence" value="ECO:0007005"/>
    <property type="project" value="PomBase"/>
</dbReference>
<dbReference type="GO" id="GO:0005783">
    <property type="term" value="C:endoplasmic reticulum"/>
    <property type="evidence" value="ECO:0000314"/>
    <property type="project" value="PomBase"/>
</dbReference>
<dbReference type="GO" id="GO:0003729">
    <property type="term" value="F:mRNA binding"/>
    <property type="evidence" value="ECO:0000318"/>
    <property type="project" value="GO_Central"/>
</dbReference>
<dbReference type="GO" id="GO:0008298">
    <property type="term" value="P:intracellular mRNA localization"/>
    <property type="evidence" value="ECO:0000266"/>
    <property type="project" value="PomBase"/>
</dbReference>
<dbReference type="GO" id="GO:0043488">
    <property type="term" value="P:regulation of mRNA stability"/>
    <property type="evidence" value="ECO:0000303"/>
    <property type="project" value="PomBase"/>
</dbReference>
<dbReference type="CDD" id="cd00105">
    <property type="entry name" value="KH-I"/>
    <property type="match status" value="1"/>
</dbReference>
<dbReference type="CDD" id="cd22448">
    <property type="entry name" value="KH-I_ScSCP160_rpt3"/>
    <property type="match status" value="1"/>
</dbReference>
<dbReference type="CDD" id="cd22449">
    <property type="entry name" value="KH-I_ScSCP160_rpt4"/>
    <property type="match status" value="1"/>
</dbReference>
<dbReference type="CDD" id="cd22450">
    <property type="entry name" value="KH-I_ScSCP160_rpt5"/>
    <property type="match status" value="1"/>
</dbReference>
<dbReference type="CDD" id="cd22408">
    <property type="entry name" value="KH-I_Vigilin_rpt4"/>
    <property type="match status" value="1"/>
</dbReference>
<dbReference type="CDD" id="cd22411">
    <property type="entry name" value="KH-I_Vigilin_rpt8"/>
    <property type="match status" value="1"/>
</dbReference>
<dbReference type="FunFam" id="3.30.1370.10:FF:000152">
    <property type="entry name" value="Vigilin 1"/>
    <property type="match status" value="1"/>
</dbReference>
<dbReference type="Gene3D" id="3.30.1370.10">
    <property type="entry name" value="K Homology domain, type 1"/>
    <property type="match status" value="10"/>
</dbReference>
<dbReference type="InterPro" id="IPR004087">
    <property type="entry name" value="KH_dom"/>
</dbReference>
<dbReference type="InterPro" id="IPR004088">
    <property type="entry name" value="KH_dom_type_1"/>
</dbReference>
<dbReference type="InterPro" id="IPR036612">
    <property type="entry name" value="KH_dom_type_1_sf"/>
</dbReference>
<dbReference type="PANTHER" id="PTHR10627:SF31">
    <property type="entry name" value="DODECA-SATELLITE-BINDING PROTEIN 1, ISOFORM A"/>
    <property type="match status" value="1"/>
</dbReference>
<dbReference type="PANTHER" id="PTHR10627">
    <property type="entry name" value="SCP160"/>
    <property type="match status" value="1"/>
</dbReference>
<dbReference type="Pfam" id="PF00013">
    <property type="entry name" value="KH_1"/>
    <property type="match status" value="9"/>
</dbReference>
<dbReference type="Pfam" id="PF24668">
    <property type="entry name" value="KH_Vigilin"/>
    <property type="match status" value="1"/>
</dbReference>
<dbReference type="SMART" id="SM00322">
    <property type="entry name" value="KH"/>
    <property type="match status" value="13"/>
</dbReference>
<dbReference type="SUPFAM" id="SSF54791">
    <property type="entry name" value="Eukaryotic type KH-domain (KH-domain type I)"/>
    <property type="match status" value="11"/>
</dbReference>
<dbReference type="PROSITE" id="PS50084">
    <property type="entry name" value="KH_TYPE_1"/>
    <property type="match status" value="11"/>
</dbReference>
<organism>
    <name type="scientific">Schizosaccharomyces pombe (strain 972 / ATCC 24843)</name>
    <name type="common">Fission yeast</name>
    <dbReference type="NCBI Taxonomy" id="284812"/>
    <lineage>
        <taxon>Eukaryota</taxon>
        <taxon>Fungi</taxon>
        <taxon>Dikarya</taxon>
        <taxon>Ascomycota</taxon>
        <taxon>Taphrinomycotina</taxon>
        <taxon>Schizosaccharomycetes</taxon>
        <taxon>Schizosaccharomycetales</taxon>
        <taxon>Schizosaccharomycetaceae</taxon>
        <taxon>Schizosaccharomyces</taxon>
    </lineage>
</organism>
<sequence>MEHLSNLEQPTTMDSYDFQKLTNDENLQGTESQVPSGSKSASTNGLLSAASSAAGSSFGLTPSAILQQKHENAQQGKKQNNSKSFSKKPAIDVHSEDAFPTLLSKTGPSKPRIVSWVRKTASNTSVAGSDSVSRDKIPFSASSRASSTKSTLSSVKETDFVTETLILSPDNQAPRMSFVGKPNSVAEIVRTVMHQTSTRINVSTASKTKNTTFLIQGKTSAVKAARRQILKLIGRRETKTMPCPVFVVGAIIGTNGQNLKSIMDRTSTRIQIPKRNNTANESSDDAKKPEKEENSAASTLDDLEPQYEMTTITIEGDFEGVELAQKDIEAIINERTSNTTVRISHISTELYSLLRGPDGKNIKELEEGRDLKVQIPFAYLDPSAPVNPIVLSGEKSAVRECALYLQGQAEELLRTTIPTMLPIPRRQHRFINGEKGVGIQDILRKSGCSVILPPINGDSDVVSVRGPALNISEGIRLTLERANSTIVDAVNITTAYASSKNPFDIASIVARLFLRSRKLIPLEEECAVQYHLPKREELQSNSNKTVIIEISGKSQEAVREGRAKLLALVNQFPESKFYKVTIDPLLQRYVIGSKGKNLQKLRNEHQVELLVGEYGEEDPDVIVCYIGADDGKSPDQIQKELADLAESVKSSAEASAKIVSEIIQVPSVYHKHIVGPKGTTLNAIIGKSEENVIVQLGKVSYRPDSTDDDVYIRGFSKDVERVVSEIKQVVRDAKNHEILHSHVEEFDFPAQYSKNVIGKNGSNVSSLREDLGVQINVEEGHIRIQGIKKNVEETAARIKSQIEALIDDTILRVNIPNDFHRQLIGSNGKYVRRLEEKFSVRVRFPREDDSSNSTGNELMKPTSPDEVVIRGGKKSVAAAKQELLELYEYEKSIAYTSTIDIPSKAVSRVVGRNGSTVENIRTQFDVKIDIGDVSTEETTPVSVRGAKADVENAIKEISAIAEEVKNLVEKVIKIDREYHRYLIGPNGSKLQNTIKECGGSTDKTETARLISFSNGNSEEERNSVVLRGDKEIVEALETRLLEIVEELKNQVEEKIEVPQRCISSIIGRMGSTRRDIERKTSTMLNIPNVLDPEETVTITIVGSPENCEKAKEMIQEKVASQYTQMITVPDTVYESIMKGILMKKLRSDLKVFVDTPEIKPVQPTEVVLEDHEDGVFPWKLVTHDYTGSSSSEWAVRGHKENVEKAIASLEKSIKQVMENCIAYLGIPTNLHRRIIGSGGSIINKIRKIAQVKIDVPRTPGDEIVVVQGSRAGVVKAKDLIFERLQENQNQE</sequence>
<feature type="chain" id="PRO_0000310368" description="Vigilin 1">
    <location>
        <begin position="1"/>
        <end position="1291"/>
    </location>
</feature>
<feature type="domain" description="KH 1" evidence="1">
    <location>
        <begin position="166"/>
        <end position="229"/>
    </location>
</feature>
<feature type="domain" description="KH 2" evidence="1">
    <location>
        <begin position="236"/>
        <end position="328"/>
    </location>
</feature>
<feature type="domain" description="KH 3" evidence="1">
    <location>
        <begin position="339"/>
        <end position="405"/>
    </location>
</feature>
<feature type="domain" description="KH 4" evidence="1">
    <location>
        <begin position="416"/>
        <end position="486"/>
    </location>
</feature>
<feature type="domain" description="KH 5" evidence="1">
    <location>
        <begin position="575"/>
        <end position="644"/>
    </location>
</feature>
<feature type="domain" description="KH 6" evidence="1">
    <location>
        <begin position="658"/>
        <end position="726"/>
    </location>
</feature>
<feature type="domain" description="KH 7" evidence="1">
    <location>
        <begin position="741"/>
        <end position="798"/>
    </location>
</feature>
<feature type="domain" description="KH 8" evidence="1">
    <location>
        <begin position="808"/>
        <end position="883"/>
    </location>
</feature>
<feature type="domain" description="KH 9" evidence="1">
    <location>
        <begin position="894"/>
        <end position="957"/>
    </location>
</feature>
<feature type="domain" description="KH 10" evidence="1">
    <location>
        <begin position="967"/>
        <end position="1040"/>
    </location>
</feature>
<feature type="domain" description="KH 11" evidence="1">
    <location>
        <begin position="1050"/>
        <end position="1114"/>
    </location>
</feature>
<feature type="domain" description="KH 12" evidence="1">
    <location>
        <begin position="1219"/>
        <end position="1280"/>
    </location>
</feature>
<feature type="region of interest" description="Disordered" evidence="2">
    <location>
        <begin position="1"/>
        <end position="45"/>
    </location>
</feature>
<feature type="region of interest" description="Disordered" evidence="2">
    <location>
        <begin position="70"/>
        <end position="91"/>
    </location>
</feature>
<feature type="region of interest" description="Disordered" evidence="2">
    <location>
        <begin position="124"/>
        <end position="148"/>
    </location>
</feature>
<feature type="region of interest" description="Disordered" evidence="2">
    <location>
        <begin position="266"/>
        <end position="303"/>
    </location>
</feature>
<feature type="region of interest" description="Disordered" evidence="2">
    <location>
        <begin position="845"/>
        <end position="865"/>
    </location>
</feature>
<feature type="compositionally biased region" description="Polar residues" evidence="2">
    <location>
        <begin position="1"/>
        <end position="39"/>
    </location>
</feature>
<feature type="compositionally biased region" description="Low complexity" evidence="2">
    <location>
        <begin position="73"/>
        <end position="88"/>
    </location>
</feature>
<feature type="compositionally biased region" description="Polar residues" evidence="2">
    <location>
        <begin position="268"/>
        <end position="281"/>
    </location>
</feature>
<feature type="compositionally biased region" description="Basic and acidic residues" evidence="2">
    <location>
        <begin position="284"/>
        <end position="294"/>
    </location>
</feature>
<feature type="modified residue" description="Phosphoserine" evidence="3">
    <location>
        <position position="115"/>
    </location>
</feature>
<feature type="modified residue" description="Phosphoserine" evidence="3">
    <location>
        <position position="934"/>
    </location>
</feature>
<feature type="modified residue" description="Phosphothreonine" evidence="3">
    <location>
        <position position="935"/>
    </location>
</feature>
<keyword id="KW-0963">Cytoplasm</keyword>
<keyword id="KW-0256">Endoplasmic reticulum</keyword>
<keyword id="KW-0597">Phosphoprotein</keyword>
<keyword id="KW-1185">Reference proteome</keyword>
<keyword id="KW-0677">Repeat</keyword>
<keyword id="KW-0694">RNA-binding</keyword>
<keyword id="KW-0346">Stress response</keyword>
<protein>
    <recommendedName>
        <fullName>Vigilin 1</fullName>
    </recommendedName>
    <alternativeName>
        <fullName>KH domain-containing protein vgl1</fullName>
    </alternativeName>
</protein>
<proteinExistence type="evidence at protein level"/>
<comment type="function">
    <text evidence="4">Required for cell survival under thermal stress.</text>
</comment>
<comment type="subcellular location">
    <subcellularLocation>
        <location>Endoplasmic reticulum</location>
    </subcellularLocation>
    <subcellularLocation>
        <location>Cytoplasm</location>
    </subcellularLocation>
    <text>Under thermal stress, relocalizes from the ER to cytoplasmic foci that are distinct from P-bodies but contain stress granule markers.</text>
</comment>
<gene>
    <name type="primary">vgl1</name>
    <name type="ORF">SPCC550.14</name>
</gene>
<reference key="1">
    <citation type="journal article" date="2002" name="Nature">
        <title>The genome sequence of Schizosaccharomyces pombe.</title>
        <authorList>
            <person name="Wood V."/>
            <person name="Gwilliam R."/>
            <person name="Rajandream M.A."/>
            <person name="Lyne M.H."/>
            <person name="Lyne R."/>
            <person name="Stewart A."/>
            <person name="Sgouros J.G."/>
            <person name="Peat N."/>
            <person name="Hayles J."/>
            <person name="Baker S.G."/>
            <person name="Basham D."/>
            <person name="Bowman S."/>
            <person name="Brooks K."/>
            <person name="Brown D."/>
            <person name="Brown S."/>
            <person name="Chillingworth T."/>
            <person name="Churcher C.M."/>
            <person name="Collins M."/>
            <person name="Connor R."/>
            <person name="Cronin A."/>
            <person name="Davis P."/>
            <person name="Feltwell T."/>
            <person name="Fraser A."/>
            <person name="Gentles S."/>
            <person name="Goble A."/>
            <person name="Hamlin N."/>
            <person name="Harris D.E."/>
            <person name="Hidalgo J."/>
            <person name="Hodgson G."/>
            <person name="Holroyd S."/>
            <person name="Hornsby T."/>
            <person name="Howarth S."/>
            <person name="Huckle E.J."/>
            <person name="Hunt S."/>
            <person name="Jagels K."/>
            <person name="James K.D."/>
            <person name="Jones L."/>
            <person name="Jones M."/>
            <person name="Leather S."/>
            <person name="McDonald S."/>
            <person name="McLean J."/>
            <person name="Mooney P."/>
            <person name="Moule S."/>
            <person name="Mungall K.L."/>
            <person name="Murphy L.D."/>
            <person name="Niblett D."/>
            <person name="Odell C."/>
            <person name="Oliver K."/>
            <person name="O'Neil S."/>
            <person name="Pearson D."/>
            <person name="Quail M.A."/>
            <person name="Rabbinowitsch E."/>
            <person name="Rutherford K.M."/>
            <person name="Rutter S."/>
            <person name="Saunders D."/>
            <person name="Seeger K."/>
            <person name="Sharp S."/>
            <person name="Skelton J."/>
            <person name="Simmonds M.N."/>
            <person name="Squares R."/>
            <person name="Squares S."/>
            <person name="Stevens K."/>
            <person name="Taylor K."/>
            <person name="Taylor R.G."/>
            <person name="Tivey A."/>
            <person name="Walsh S.V."/>
            <person name="Warren T."/>
            <person name="Whitehead S."/>
            <person name="Woodward J.R."/>
            <person name="Volckaert G."/>
            <person name="Aert R."/>
            <person name="Robben J."/>
            <person name="Grymonprez B."/>
            <person name="Weltjens I."/>
            <person name="Vanstreels E."/>
            <person name="Rieger M."/>
            <person name="Schaefer M."/>
            <person name="Mueller-Auer S."/>
            <person name="Gabel C."/>
            <person name="Fuchs M."/>
            <person name="Duesterhoeft A."/>
            <person name="Fritzc C."/>
            <person name="Holzer E."/>
            <person name="Moestl D."/>
            <person name="Hilbert H."/>
            <person name="Borzym K."/>
            <person name="Langer I."/>
            <person name="Beck A."/>
            <person name="Lehrach H."/>
            <person name="Reinhardt R."/>
            <person name="Pohl T.M."/>
            <person name="Eger P."/>
            <person name="Zimmermann W."/>
            <person name="Wedler H."/>
            <person name="Wambutt R."/>
            <person name="Purnelle B."/>
            <person name="Goffeau A."/>
            <person name="Cadieu E."/>
            <person name="Dreano S."/>
            <person name="Gloux S."/>
            <person name="Lelaure V."/>
            <person name="Mottier S."/>
            <person name="Galibert F."/>
            <person name="Aves S.J."/>
            <person name="Xiang Z."/>
            <person name="Hunt C."/>
            <person name="Moore K."/>
            <person name="Hurst S.M."/>
            <person name="Lucas M."/>
            <person name="Rochet M."/>
            <person name="Gaillardin C."/>
            <person name="Tallada V.A."/>
            <person name="Garzon A."/>
            <person name="Thode G."/>
            <person name="Daga R.R."/>
            <person name="Cruzado L."/>
            <person name="Jimenez J."/>
            <person name="Sanchez M."/>
            <person name="del Rey F."/>
            <person name="Benito J."/>
            <person name="Dominguez A."/>
            <person name="Revuelta J.L."/>
            <person name="Moreno S."/>
            <person name="Armstrong J."/>
            <person name="Forsburg S.L."/>
            <person name="Cerutti L."/>
            <person name="Lowe T."/>
            <person name="McCombie W.R."/>
            <person name="Paulsen I."/>
            <person name="Potashkin J."/>
            <person name="Shpakovski G.V."/>
            <person name="Ussery D."/>
            <person name="Barrell B.G."/>
            <person name="Nurse P."/>
        </authorList>
    </citation>
    <scope>NUCLEOTIDE SEQUENCE [LARGE SCALE GENOMIC DNA]</scope>
    <source>
        <strain>972 / ATCC 24843</strain>
    </source>
</reference>
<reference key="2">
    <citation type="journal article" date="2011" name="Science">
        <title>Comparative functional genomics of the fission yeasts.</title>
        <authorList>
            <person name="Rhind N."/>
            <person name="Chen Z."/>
            <person name="Yassour M."/>
            <person name="Thompson D.A."/>
            <person name="Haas B.J."/>
            <person name="Habib N."/>
            <person name="Wapinski I."/>
            <person name="Roy S."/>
            <person name="Lin M.F."/>
            <person name="Heiman D.I."/>
            <person name="Young S.K."/>
            <person name="Furuya K."/>
            <person name="Guo Y."/>
            <person name="Pidoux A."/>
            <person name="Chen H.M."/>
            <person name="Robbertse B."/>
            <person name="Goldberg J.M."/>
            <person name="Aoki K."/>
            <person name="Bayne E.H."/>
            <person name="Berlin A.M."/>
            <person name="Desjardins C.A."/>
            <person name="Dobbs E."/>
            <person name="Dukaj L."/>
            <person name="Fan L."/>
            <person name="FitzGerald M.G."/>
            <person name="French C."/>
            <person name="Gujja S."/>
            <person name="Hansen K."/>
            <person name="Keifenheim D."/>
            <person name="Levin J.Z."/>
            <person name="Mosher R.A."/>
            <person name="Mueller C.A."/>
            <person name="Pfiffner J."/>
            <person name="Priest M."/>
            <person name="Russ C."/>
            <person name="Smialowska A."/>
            <person name="Swoboda P."/>
            <person name="Sykes S.M."/>
            <person name="Vaughn M."/>
            <person name="Vengrova S."/>
            <person name="Yoder R."/>
            <person name="Zeng Q."/>
            <person name="Allshire R."/>
            <person name="Baulcombe D."/>
            <person name="Birren B.W."/>
            <person name="Brown W."/>
            <person name="Ekwall K."/>
            <person name="Kellis M."/>
            <person name="Leatherwood J."/>
            <person name="Levin H."/>
            <person name="Margalit H."/>
            <person name="Martienssen R."/>
            <person name="Nieduszynski C.A."/>
            <person name="Spatafora J.W."/>
            <person name="Friedman N."/>
            <person name="Dalgaard J.Z."/>
            <person name="Baumann P."/>
            <person name="Niki H."/>
            <person name="Regev A."/>
            <person name="Nusbaum C."/>
        </authorList>
    </citation>
    <scope>REVISION OF GENE MODEL</scope>
</reference>
<reference key="3">
    <citation type="journal article" date="2006" name="Nat. Biotechnol.">
        <title>ORFeome cloning and global analysis of protein localization in the fission yeast Schizosaccharomyces pombe.</title>
        <authorList>
            <person name="Matsuyama A."/>
            <person name="Arai R."/>
            <person name="Yashiroda Y."/>
            <person name="Shirai A."/>
            <person name="Kamata A."/>
            <person name="Sekido S."/>
            <person name="Kobayashi Y."/>
            <person name="Hashimoto A."/>
            <person name="Hamamoto M."/>
            <person name="Hiraoka Y."/>
            <person name="Horinouchi S."/>
            <person name="Yoshida M."/>
        </authorList>
    </citation>
    <scope>SUBCELLULAR LOCATION [LARGE SCALE ANALYSIS]</scope>
</reference>
<reference key="4">
    <citation type="journal article" date="2008" name="J. Proteome Res.">
        <title>Phosphoproteome analysis of fission yeast.</title>
        <authorList>
            <person name="Wilson-Grady J.T."/>
            <person name="Villen J."/>
            <person name="Gygi S.P."/>
        </authorList>
    </citation>
    <scope>PHOSPHORYLATION [LARGE SCALE ANALYSIS] AT SER-115; SER-934 AND THR-935</scope>
    <scope>IDENTIFICATION BY MASS SPECTROMETRY</scope>
</reference>
<reference key="5">
    <citation type="journal article" date="2010" name="Nucleic Acids Res.">
        <title>Vgl1, a multi-KH domain protein, is a novel component of the fission yeast stress granules required for cell survival under thermal stress.</title>
        <authorList>
            <person name="Wen W.L."/>
            <person name="Stevenson A.L."/>
            <person name="Wang C.Y."/>
            <person name="Chen H.J."/>
            <person name="Kearsey S.E."/>
            <person name="Norbury C.J."/>
            <person name="Watt S."/>
            <person name="Bahler J."/>
            <person name="Wang S.W."/>
        </authorList>
    </citation>
    <scope>FUNCTION</scope>
    <scope>SUBCELLULAR LOCATION</scope>
</reference>
<accession>O59810</accession>
<name>VGL1_SCHPO</name>
<evidence type="ECO:0000255" key="1">
    <source>
        <dbReference type="PROSITE-ProRule" id="PRU00117"/>
    </source>
</evidence>
<evidence type="ECO:0000256" key="2">
    <source>
        <dbReference type="SAM" id="MobiDB-lite"/>
    </source>
</evidence>
<evidence type="ECO:0000269" key="3">
    <source>
    </source>
</evidence>
<evidence type="ECO:0000269" key="4">
    <source>
    </source>
</evidence>